<gene>
    <name evidence="1" type="primary">nnrE</name>
    <name type="ordered locus">MTES_0133</name>
</gene>
<evidence type="ECO:0000255" key="1">
    <source>
        <dbReference type="HAMAP-Rule" id="MF_01966"/>
    </source>
</evidence>
<evidence type="ECO:0000256" key="2">
    <source>
        <dbReference type="SAM" id="MobiDB-lite"/>
    </source>
</evidence>
<reference key="1">
    <citation type="journal article" date="2011" name="J. Bacteriol.">
        <title>Genome sequence of Microbacterium testaceum StLB037, an N-acylhomoserine lactone-degrading bacterium isolated from potato leaves.</title>
        <authorList>
            <person name="Morohoshi T."/>
            <person name="Wang W.Z."/>
            <person name="Someya N."/>
            <person name="Ikeda T."/>
        </authorList>
    </citation>
    <scope>NUCLEOTIDE SEQUENCE [LARGE SCALE GENOMIC DNA]</scope>
    <source>
        <strain>StLB037</strain>
    </source>
</reference>
<protein>
    <recommendedName>
        <fullName evidence="1">NAD(P)H-hydrate epimerase</fullName>
        <ecNumber evidence="1">5.1.99.6</ecNumber>
    </recommendedName>
    <alternativeName>
        <fullName evidence="1">NAD(P)HX epimerase</fullName>
    </alternativeName>
</protein>
<sequence length="256" mass="26451">MADPRRDPAAESKDRPSTERVAAYTADAVRAAEAPLLAEGRPLMRTAARALADIAAAEVRTTPGAVLVLAGAGDNGGDALFAAADLASSAERVDVVLVRDRVHREALDAAVAAGARVVSVSDASAGVADYALVLDGILGIGRLADRRLRGSARALVERLLALAHRPRVLAVDVPSGLDPDDGTADAVILPADVTVTFGALKAGLVRGRGPELSGRVHLVDLGLEPYLRRAHPAVTAAIDVVRETPRAAETDRAQRA</sequence>
<keyword id="KW-0413">Isomerase</keyword>
<keyword id="KW-0479">Metal-binding</keyword>
<keyword id="KW-0520">NAD</keyword>
<keyword id="KW-0521">NADP</keyword>
<keyword id="KW-0547">Nucleotide-binding</keyword>
<keyword id="KW-0630">Potassium</keyword>
<organism>
    <name type="scientific">Microbacterium testaceum (strain StLB037)</name>
    <dbReference type="NCBI Taxonomy" id="979556"/>
    <lineage>
        <taxon>Bacteria</taxon>
        <taxon>Bacillati</taxon>
        <taxon>Actinomycetota</taxon>
        <taxon>Actinomycetes</taxon>
        <taxon>Micrococcales</taxon>
        <taxon>Microbacteriaceae</taxon>
        <taxon>Microbacterium</taxon>
    </lineage>
</organism>
<proteinExistence type="inferred from homology"/>
<name>NNRE_MICTS</name>
<comment type="function">
    <text evidence="1">Catalyzes the epimerization of the S- and R-forms of NAD(P)HX, a damaged form of NAD(P)H that is a result of enzymatic or heat-dependent hydration. This is a prerequisite for the S-specific NAD(P)H-hydrate dehydratase to allow the repair of both epimers of NAD(P)HX.</text>
</comment>
<comment type="catalytic activity">
    <reaction evidence="1">
        <text>(6R)-NADHX = (6S)-NADHX</text>
        <dbReference type="Rhea" id="RHEA:32215"/>
        <dbReference type="ChEBI" id="CHEBI:64074"/>
        <dbReference type="ChEBI" id="CHEBI:64075"/>
        <dbReference type="EC" id="5.1.99.6"/>
    </reaction>
</comment>
<comment type="catalytic activity">
    <reaction evidence="1">
        <text>(6R)-NADPHX = (6S)-NADPHX</text>
        <dbReference type="Rhea" id="RHEA:32227"/>
        <dbReference type="ChEBI" id="CHEBI:64076"/>
        <dbReference type="ChEBI" id="CHEBI:64077"/>
        <dbReference type="EC" id="5.1.99.6"/>
    </reaction>
</comment>
<comment type="cofactor">
    <cofactor evidence="1">
        <name>K(+)</name>
        <dbReference type="ChEBI" id="CHEBI:29103"/>
    </cofactor>
    <text evidence="1">Binds 1 potassium ion per subunit.</text>
</comment>
<comment type="similarity">
    <text evidence="1">Belongs to the NnrE/AIBP family.</text>
</comment>
<dbReference type="EC" id="5.1.99.6" evidence="1"/>
<dbReference type="EMBL" id="AP012052">
    <property type="protein sequence ID" value="BAJ73097.1"/>
    <property type="molecule type" value="Genomic_DNA"/>
</dbReference>
<dbReference type="RefSeq" id="WP_013583224.1">
    <property type="nucleotide sequence ID" value="NC_015125.1"/>
</dbReference>
<dbReference type="SMR" id="E8N877"/>
<dbReference type="STRING" id="979556.MTES_0133"/>
<dbReference type="KEGG" id="mts:MTES_0133"/>
<dbReference type="eggNOG" id="COG0062">
    <property type="taxonomic scope" value="Bacteria"/>
</dbReference>
<dbReference type="HOGENOM" id="CLU_024853_0_2_11"/>
<dbReference type="Proteomes" id="UP000008975">
    <property type="component" value="Chromosome"/>
</dbReference>
<dbReference type="GO" id="GO:0046872">
    <property type="term" value="F:metal ion binding"/>
    <property type="evidence" value="ECO:0007669"/>
    <property type="project" value="UniProtKB-KW"/>
</dbReference>
<dbReference type="GO" id="GO:0052856">
    <property type="term" value="F:NAD(P)HX epimerase activity"/>
    <property type="evidence" value="ECO:0007669"/>
    <property type="project" value="UniProtKB-UniRule"/>
</dbReference>
<dbReference type="GO" id="GO:0000166">
    <property type="term" value="F:nucleotide binding"/>
    <property type="evidence" value="ECO:0007669"/>
    <property type="project" value="UniProtKB-KW"/>
</dbReference>
<dbReference type="Gene3D" id="3.40.50.10260">
    <property type="entry name" value="YjeF N-terminal domain"/>
    <property type="match status" value="1"/>
</dbReference>
<dbReference type="HAMAP" id="MF_01966">
    <property type="entry name" value="NADHX_epimerase"/>
    <property type="match status" value="1"/>
</dbReference>
<dbReference type="InterPro" id="IPR004443">
    <property type="entry name" value="YjeF_N_dom"/>
</dbReference>
<dbReference type="InterPro" id="IPR036652">
    <property type="entry name" value="YjeF_N_dom_sf"/>
</dbReference>
<dbReference type="NCBIfam" id="TIGR00197">
    <property type="entry name" value="yjeF_nterm"/>
    <property type="match status" value="1"/>
</dbReference>
<dbReference type="Pfam" id="PF03853">
    <property type="entry name" value="YjeF_N"/>
    <property type="match status" value="1"/>
</dbReference>
<dbReference type="SUPFAM" id="SSF64153">
    <property type="entry name" value="YjeF N-terminal domain-like"/>
    <property type="match status" value="1"/>
</dbReference>
<dbReference type="PROSITE" id="PS51385">
    <property type="entry name" value="YJEF_N"/>
    <property type="match status" value="1"/>
</dbReference>
<feature type="chain" id="PRO_0000416370" description="NAD(P)H-hydrate epimerase">
    <location>
        <begin position="1"/>
        <end position="256"/>
    </location>
</feature>
<feature type="domain" description="YjeF N-terminal" evidence="1">
    <location>
        <begin position="23"/>
        <end position="229"/>
    </location>
</feature>
<feature type="region of interest" description="Disordered" evidence="2">
    <location>
        <begin position="1"/>
        <end position="21"/>
    </location>
</feature>
<feature type="compositionally biased region" description="Basic and acidic residues" evidence="2">
    <location>
        <begin position="1"/>
        <end position="18"/>
    </location>
</feature>
<feature type="binding site" evidence="1">
    <location>
        <begin position="74"/>
        <end position="78"/>
    </location>
    <ligand>
        <name>(6S)-NADPHX</name>
        <dbReference type="ChEBI" id="CHEBI:64076"/>
    </ligand>
</feature>
<feature type="binding site" evidence="1">
    <location>
        <position position="75"/>
    </location>
    <ligand>
        <name>K(+)</name>
        <dbReference type="ChEBI" id="CHEBI:29103"/>
    </ligand>
</feature>
<feature type="binding site" evidence="1">
    <location>
        <position position="135"/>
    </location>
    <ligand>
        <name>K(+)</name>
        <dbReference type="ChEBI" id="CHEBI:29103"/>
    </ligand>
</feature>
<feature type="binding site" evidence="1">
    <location>
        <begin position="139"/>
        <end position="147"/>
    </location>
    <ligand>
        <name>(6S)-NADPHX</name>
        <dbReference type="ChEBI" id="CHEBI:64076"/>
    </ligand>
</feature>
<feature type="binding site" evidence="1">
    <location>
        <position position="172"/>
    </location>
    <ligand>
        <name>(6S)-NADPHX</name>
        <dbReference type="ChEBI" id="CHEBI:64076"/>
    </ligand>
</feature>
<feature type="binding site" evidence="1">
    <location>
        <position position="175"/>
    </location>
    <ligand>
        <name>K(+)</name>
        <dbReference type="ChEBI" id="CHEBI:29103"/>
    </ligand>
</feature>
<accession>E8N877</accession>